<gene>
    <name evidence="11 12" type="primary">Slc26a8</name>
    <name evidence="9" type="synonym">Tat1</name>
</gene>
<name>S26A8_MOUSE</name>
<proteinExistence type="evidence at transcript level"/>
<accession>Q8R0C3</accession>
<organism>
    <name type="scientific">Mus musculus</name>
    <name type="common">Mouse</name>
    <dbReference type="NCBI Taxonomy" id="10090"/>
    <lineage>
        <taxon>Eukaryota</taxon>
        <taxon>Metazoa</taxon>
        <taxon>Chordata</taxon>
        <taxon>Craniata</taxon>
        <taxon>Vertebrata</taxon>
        <taxon>Euteleostomi</taxon>
        <taxon>Mammalia</taxon>
        <taxon>Eutheria</taxon>
        <taxon>Euarchontoglires</taxon>
        <taxon>Glires</taxon>
        <taxon>Rodentia</taxon>
        <taxon>Myomorpha</taxon>
        <taxon>Muroidea</taxon>
        <taxon>Muridae</taxon>
        <taxon>Murinae</taxon>
        <taxon>Mus</taxon>
        <taxon>Mus</taxon>
    </lineage>
</organism>
<keyword id="KW-0025">Alternative splicing</keyword>
<keyword id="KW-0039">Anion exchange</keyword>
<keyword id="KW-0217">Developmental protein</keyword>
<keyword id="KW-0221">Differentiation</keyword>
<keyword id="KW-0325">Glycoprotein</keyword>
<keyword id="KW-0406">Ion transport</keyword>
<keyword id="KW-0469">Meiosis</keyword>
<keyword id="KW-0472">Membrane</keyword>
<keyword id="KW-1185">Reference proteome</keyword>
<keyword id="KW-0744">Spermatogenesis</keyword>
<keyword id="KW-0812">Transmembrane</keyword>
<keyword id="KW-1133">Transmembrane helix</keyword>
<keyword id="KW-0813">Transport</keyword>
<comment type="function">
    <text evidence="1 6 7">Antiporter that mediates the exchange of sulfate and oxalate against chloride ions across a membrane. Stimulates anion transport activity of CFTR (By similarity). May cooperate with CFTR in the regulation of chloride and bicarbonate ions fluxes required for activation of the ADCY10/PKA pathway during sperm motility and sperm capacitation (PubMed:22121115). May play a role in sperm tail differentiation and motility and hence male fertility (PubMed:17517695).</text>
</comment>
<comment type="catalytic activity">
    <reaction evidence="1">
        <text>sulfate(out) + chloride(in) = sulfate(in) + chloride(out)</text>
        <dbReference type="Rhea" id="RHEA:75295"/>
        <dbReference type="ChEBI" id="CHEBI:16189"/>
        <dbReference type="ChEBI" id="CHEBI:17996"/>
    </reaction>
</comment>
<comment type="catalytic activity">
    <reaction evidence="1">
        <text>oxalate(in) + chloride(out) = oxalate(out) + chloride(in)</text>
        <dbReference type="Rhea" id="RHEA:72263"/>
        <dbReference type="ChEBI" id="CHEBI:17996"/>
        <dbReference type="ChEBI" id="CHEBI:30623"/>
    </reaction>
</comment>
<comment type="subunit">
    <text evidence="1">Interacts with RACGAP1. Interacts with CFTR; stimulates anion transport activity of CFTR.</text>
</comment>
<comment type="subcellular location">
    <subcellularLocation>
        <location evidence="6">Membrane</location>
        <topology evidence="2">Multi-pass membrane protein</topology>
    </subcellularLocation>
    <text evidence="6">Located at the annulus ring structure within the sperm cell.</text>
</comment>
<comment type="alternative products">
    <event type="alternative splicing"/>
    <isoform>
        <id>Q8R0C3-1</id>
        <name>1</name>
        <sequence type="displayed"/>
    </isoform>
    <isoform>
        <id>Q8R0C3-2</id>
        <name evidence="5">2</name>
        <sequence type="described" ref="VSP_052702 VSP_052703"/>
    </isoform>
</comment>
<comment type="tissue specificity">
    <text evidence="6">Expressed in testis and epididymis. Located at the end of the midpiece of the flagella, known as the annulus, in spermatozoa.</text>
</comment>
<comment type="PTM">
    <text evidence="1">N-glycosylated.</text>
</comment>
<comment type="disruption phenotype">
    <text evidence="6">Homozygous knockout mice lacking Tat1 are viable and indistinguishable from their wild-type littermates in survival rate, general appearance, and gross behavior (i.e. size, weight, fur, and activity) (PubMed:17517695). However, over a period of two months, males becames infertile despite normal sexual behavior (PubMed:17517695). Sperm lacks motility and displayed a capacitation defect (PubMed:17517695).</text>
</comment>
<comment type="similarity">
    <text evidence="2">Belongs to the SLC26A/SulP transporter (TC 2.A.53) family.</text>
</comment>
<feature type="chain" id="PRO_0000322588" description="Testis anion transporter 1">
    <location>
        <begin position="1"/>
        <end position="999"/>
    </location>
</feature>
<feature type="topological domain" description="Cytoplasmic" evidence="2">
    <location>
        <begin position="1"/>
        <end position="93"/>
    </location>
</feature>
<feature type="transmembrane region" description="Helical" evidence="2">
    <location>
        <begin position="94"/>
        <end position="114"/>
    </location>
</feature>
<feature type="topological domain" description="Extracellular" evidence="2">
    <location>
        <begin position="115"/>
        <end position="117"/>
    </location>
</feature>
<feature type="transmembrane region" description="Helical" evidence="2">
    <location>
        <begin position="118"/>
        <end position="138"/>
    </location>
</feature>
<feature type="topological domain" description="Cytoplasmic" evidence="2">
    <location>
        <position position="139"/>
    </location>
</feature>
<feature type="transmembrane region" description="Helical" evidence="2">
    <location>
        <begin position="140"/>
        <end position="160"/>
    </location>
</feature>
<feature type="topological domain" description="Extracellular" evidence="2">
    <location>
        <begin position="161"/>
        <end position="200"/>
    </location>
</feature>
<feature type="transmembrane region" description="Helical" evidence="2">
    <location>
        <begin position="201"/>
        <end position="221"/>
    </location>
</feature>
<feature type="topological domain" description="Cytoplasmic" evidence="2">
    <location>
        <begin position="222"/>
        <end position="230"/>
    </location>
</feature>
<feature type="transmembrane region" description="Helical" evidence="2">
    <location>
        <begin position="231"/>
        <end position="251"/>
    </location>
</feature>
<feature type="topological domain" description="Extracellular" evidence="2">
    <location>
        <begin position="252"/>
        <end position="268"/>
    </location>
</feature>
<feature type="transmembrane region" description="Helical" evidence="2">
    <location>
        <begin position="269"/>
        <end position="289"/>
    </location>
</feature>
<feature type="topological domain" description="Cytoplasmic" evidence="2">
    <location>
        <begin position="290"/>
        <end position="305"/>
    </location>
</feature>
<feature type="transmembrane region" description="Helical" evidence="2">
    <location>
        <begin position="306"/>
        <end position="326"/>
    </location>
</feature>
<feature type="topological domain" description="Extracellular" evidence="2">
    <location>
        <begin position="327"/>
        <end position="354"/>
    </location>
</feature>
<feature type="transmembrane region" description="Helical" evidence="2">
    <location>
        <begin position="355"/>
        <end position="375"/>
    </location>
</feature>
<feature type="topological domain" description="Cytoplasmic" evidence="2">
    <location>
        <begin position="376"/>
        <end position="390"/>
    </location>
</feature>
<feature type="transmembrane region" description="Helical" evidence="2">
    <location>
        <begin position="391"/>
        <end position="411"/>
    </location>
</feature>
<feature type="topological domain" description="Extracellular" evidence="2">
    <location>
        <begin position="412"/>
        <end position="427"/>
    </location>
</feature>
<feature type="transmembrane region" description="Helical" evidence="2">
    <location>
        <begin position="428"/>
        <end position="448"/>
    </location>
</feature>
<feature type="topological domain" description="Cytoplasmic" evidence="2">
    <location>
        <begin position="449"/>
        <end position="453"/>
    </location>
</feature>
<feature type="transmembrane region" description="Helical" evidence="2">
    <location>
        <begin position="454"/>
        <end position="474"/>
    </location>
</feature>
<feature type="topological domain" description="Extracellular" evidence="2">
    <location>
        <begin position="475"/>
        <end position="494"/>
    </location>
</feature>
<feature type="transmembrane region" description="Helical" evidence="2">
    <location>
        <begin position="495"/>
        <end position="515"/>
    </location>
</feature>
<feature type="topological domain" description="Cytoplasmic" evidence="2">
    <location>
        <begin position="516"/>
        <end position="544"/>
    </location>
</feature>
<feature type="transmembrane region" description="Helical" evidence="2">
    <location>
        <begin position="545"/>
        <end position="565"/>
    </location>
</feature>
<feature type="topological domain" description="Extracellular" evidence="2">
    <location>
        <begin position="566"/>
        <end position="999"/>
    </location>
</feature>
<feature type="domain" description="STAS" evidence="3">
    <location>
        <begin position="541"/>
        <end position="796"/>
    </location>
</feature>
<feature type="region of interest" description="Interaction with RACGAP1" evidence="1">
    <location>
        <begin position="661"/>
        <end position="999"/>
    </location>
</feature>
<feature type="region of interest" description="Disordered" evidence="4">
    <location>
        <begin position="678"/>
        <end position="701"/>
    </location>
</feature>
<feature type="region of interest" description="Disordered" evidence="4">
    <location>
        <begin position="893"/>
        <end position="999"/>
    </location>
</feature>
<feature type="compositionally biased region" description="Pro residues" evidence="4">
    <location>
        <begin position="684"/>
        <end position="696"/>
    </location>
</feature>
<feature type="compositionally biased region" description="Acidic residues" evidence="4">
    <location>
        <begin position="893"/>
        <end position="903"/>
    </location>
</feature>
<feature type="compositionally biased region" description="Acidic residues" evidence="4">
    <location>
        <begin position="912"/>
        <end position="947"/>
    </location>
</feature>
<feature type="compositionally biased region" description="Polar residues" evidence="4">
    <location>
        <begin position="973"/>
        <end position="982"/>
    </location>
</feature>
<feature type="glycosylation site" description="N-linked (GlcNAc...) asparagine" evidence="2">
    <location>
        <position position="190"/>
    </location>
</feature>
<feature type="splice variant" id="VSP_052702" description="In isoform 2." evidence="8">
    <original>IIWMVTFSSAILLGLDVGLLISLAFTFFVITIRSHR</original>
    <variation>VSTDASSGCNLGVRGAEAHTHTLPHGQFPGLDPWGQ</variation>
    <location>
        <begin position="486"/>
        <end position="521"/>
    </location>
</feature>
<feature type="splice variant" id="VSP_052703" description="In isoform 2." evidence="8">
    <location>
        <begin position="522"/>
        <end position="999"/>
    </location>
</feature>
<reference key="1">
    <citation type="journal article" date="2009" name="PLoS Biol.">
        <title>Lineage-specific biology revealed by a finished genome assembly of the mouse.</title>
        <authorList>
            <person name="Church D.M."/>
            <person name="Goodstadt L."/>
            <person name="Hillier L.W."/>
            <person name="Zody M.C."/>
            <person name="Goldstein S."/>
            <person name="She X."/>
            <person name="Bult C.J."/>
            <person name="Agarwala R."/>
            <person name="Cherry J.L."/>
            <person name="DiCuccio M."/>
            <person name="Hlavina W."/>
            <person name="Kapustin Y."/>
            <person name="Meric P."/>
            <person name="Maglott D."/>
            <person name="Birtle Z."/>
            <person name="Marques A.C."/>
            <person name="Graves T."/>
            <person name="Zhou S."/>
            <person name="Teague B."/>
            <person name="Potamousis K."/>
            <person name="Churas C."/>
            <person name="Place M."/>
            <person name="Herschleb J."/>
            <person name="Runnheim R."/>
            <person name="Forrest D."/>
            <person name="Amos-Landgraf J."/>
            <person name="Schwartz D.C."/>
            <person name="Cheng Z."/>
            <person name="Lindblad-Toh K."/>
            <person name="Eichler E.E."/>
            <person name="Ponting C.P."/>
        </authorList>
    </citation>
    <scope>NUCLEOTIDE SEQUENCE [LARGE SCALE GENOMIC DNA]</scope>
    <source>
        <strain>C57BL/6J</strain>
    </source>
</reference>
<reference evidence="10 11" key="2">
    <citation type="journal article" date="2004" name="Genome Res.">
        <title>The status, quality, and expansion of the NIH full-length cDNA project: the Mammalian Gene Collection (MGC).</title>
        <authorList>
            <consortium name="The MGC Project Team"/>
        </authorList>
    </citation>
    <scope>NUCLEOTIDE SEQUENCE [LARGE SCALE MRNA] (ISOFORM 2)</scope>
    <source>
        <strain evidence="5">C57BL/6J</strain>
        <tissue evidence="11">Retina</tissue>
    </source>
</reference>
<reference evidence="10" key="3">
    <citation type="journal article" date="2007" name="Hum. Mol. Genet.">
        <title>The testis anion transporter 1 (Slc26a8) is required for sperm terminal differentiation and male fertility in the mouse.</title>
        <authorList>
            <person name="Toure A."/>
            <person name="Lhuillier P."/>
            <person name="Gossen J.A."/>
            <person name="Kuil C.W."/>
            <person name="Lhote D."/>
            <person name="Jegou B."/>
            <person name="Escalier D."/>
            <person name="Gacon G."/>
        </authorList>
    </citation>
    <scope>FUNCTION</scope>
    <scope>SUBCELLULAR LOCATION</scope>
    <scope>TISSUE SPECIFICITY</scope>
    <scope>DISRUPTION PHENOTYPE</scope>
</reference>
<reference key="4">
    <citation type="journal article" date="2012" name="Hum. Mol. Genet.">
        <title>The testis anion transporter TAT1 (SLC26A8) physically and functionally interacts with the cystic fibrosis transmembrane conductance regulator channel: a potential role during sperm capacitation.</title>
        <authorList>
            <person name="Rode B."/>
            <person name="Dirami T."/>
            <person name="Bakouh N."/>
            <person name="Rizk-Rabin M."/>
            <person name="Norez C."/>
            <person name="Lhuillier P."/>
            <person name="Lores P."/>
            <person name="Jollivet M."/>
            <person name="Melin P."/>
            <person name="Zvetkova I."/>
            <person name="Bienvenu T."/>
            <person name="Becq F."/>
            <person name="Planelles G."/>
            <person name="Edelman A."/>
            <person name="Gacon G."/>
            <person name="Toure A."/>
        </authorList>
    </citation>
    <scope>FUNCTION</scope>
</reference>
<sequence>MQTERSLQSFSNRYTQIPFVYDVKRSVYNEENFQQEHRKKGPTSGNVDIDITTFKHHVQCGCSWHKFLRCMLTVFPFLEWICLYRFKDWLLGDLLAGLSVGLVQVPQGLILSLLTRQLIPPLNVTYAAFCSSVIYVIFGSCHQMSIGPFFLVSALMINVLKDRPFNNGHLILGTFVKDDFSVPTFYLSYNRSLSMVASTTFLTGIIQLSMGMLGMGFMATYLPEAATSAYLAAVALHIILAQMTCILGIMVSFHAGPISFIYNIINYCIALPKANSTSILLFITSVVALRINKCIRITFNRYPIEFPMELLLILGFSLLTSKITMATENSKMLMNMIPYSFVFPENPEFGILSRVVLQALSLSFVSSFLLISLGKKIANFHNYRTNSNQDLIAIGLCNLLSSFFKCCVFTGSLSRTTIQDKSGGRQQFASLVGAGVMLLLMVKMESFFHNLPNAVLAGIILSNVVPYLEAIYNLPSLWRQDQYECIIWMVTFSSAILLGLDVGLLISLAFTFFVITIRSHRTKILVLGQIPNTNIYRNVNDYREVILIPGVKIFQCCSSITFVNVYHLKQKVLKEVNMVKLPLKEEEIYTLFHESETSIAENKLCRCFCDCEELEPEIRVVYTERYENRQEQDSSINLIRCSYLGSGDSSQVTSEEQIPYTVSSTSQRNIVQSYEDTEKAWLPNSPPRNSPLPPPEASESLAQSRSRSIIMPYSDTSVQNNTHTIILDFSMVHYVDNRALVILRQMCNAFYNANILVLISGCHTSVVKSFEKNDFFDEGITKAQLFLSLHDAVLFALSRKFSEPSDLSMDETETVIQETYSESDKNGNLSNLRLKTGKAIIEGSQHASPGFTKNLKPGKDDLEFDLELDPMLSFEQSSGMDLNLDLDLDLDQSELDPGSELDSEIQAKPELELESELETDAQTEPETEEEPELEPEPEPEPETEPEPEPERERKTRTRSQSPWRNYFTAYRFGSSNSQSRAPPQTRPEKRKPHNYPNSP</sequence>
<protein>
    <recommendedName>
        <fullName evidence="10">Testis anion transporter 1</fullName>
    </recommendedName>
    <alternativeName>
        <fullName>Anion exchange transporter</fullName>
    </alternativeName>
    <alternativeName>
        <fullName>Solute carrier family 26 member 8</fullName>
    </alternativeName>
</protein>
<evidence type="ECO:0000250" key="1">
    <source>
        <dbReference type="UniProtKB" id="Q96RN1"/>
    </source>
</evidence>
<evidence type="ECO:0000255" key="2"/>
<evidence type="ECO:0000255" key="3">
    <source>
        <dbReference type="PROSITE-ProRule" id="PRU00198"/>
    </source>
</evidence>
<evidence type="ECO:0000256" key="4">
    <source>
        <dbReference type="SAM" id="MobiDB-lite"/>
    </source>
</evidence>
<evidence type="ECO:0000269" key="5">
    <source>
    </source>
</evidence>
<evidence type="ECO:0000269" key="6">
    <source>
    </source>
</evidence>
<evidence type="ECO:0000269" key="7">
    <source>
    </source>
</evidence>
<evidence type="ECO:0000303" key="8">
    <source>
    </source>
</evidence>
<evidence type="ECO:0000303" key="9">
    <source>
    </source>
</evidence>
<evidence type="ECO:0000305" key="10"/>
<evidence type="ECO:0000312" key="11">
    <source>
        <dbReference type="EMBL" id="AAH27076.1"/>
    </source>
</evidence>
<evidence type="ECO:0000312" key="12">
    <source>
        <dbReference type="MGI" id="MGI:2385046"/>
    </source>
</evidence>
<dbReference type="EMBL" id="AC170998">
    <property type="status" value="NOT_ANNOTATED_CDS"/>
    <property type="molecule type" value="Genomic_DNA"/>
</dbReference>
<dbReference type="EMBL" id="BC027076">
    <property type="protein sequence ID" value="AAH27076.1"/>
    <property type="molecule type" value="mRNA"/>
</dbReference>
<dbReference type="CCDS" id="CCDS70779.1">
    <molecule id="Q8R0C3-1"/>
</dbReference>
<dbReference type="RefSeq" id="NP_001277249.1">
    <molecule id="Q8R0C3-1"/>
    <property type="nucleotide sequence ID" value="NM_001290320.2"/>
</dbReference>
<dbReference type="SMR" id="Q8R0C3"/>
<dbReference type="BioGRID" id="230299">
    <property type="interactions" value="2"/>
</dbReference>
<dbReference type="FunCoup" id="Q8R0C3">
    <property type="interactions" value="28"/>
</dbReference>
<dbReference type="IntAct" id="Q8R0C3">
    <property type="interactions" value="1"/>
</dbReference>
<dbReference type="STRING" id="10090.ENSMUSP00000110412"/>
<dbReference type="GlyCosmos" id="Q8R0C3">
    <property type="glycosylation" value="1 site, No reported glycans"/>
</dbReference>
<dbReference type="GlyGen" id="Q8R0C3">
    <property type="glycosylation" value="2 sites"/>
</dbReference>
<dbReference type="iPTMnet" id="Q8R0C3"/>
<dbReference type="PhosphoSitePlus" id="Q8R0C3"/>
<dbReference type="SwissPalm" id="Q8R0C3"/>
<dbReference type="jPOST" id="Q8R0C3"/>
<dbReference type="PaxDb" id="10090-ENSMUSP00000110412"/>
<dbReference type="ProteomicsDB" id="253376">
    <molecule id="Q8R0C3-1"/>
</dbReference>
<dbReference type="ProteomicsDB" id="253377">
    <molecule id="Q8R0C3-2"/>
</dbReference>
<dbReference type="Antibodypedia" id="29584">
    <property type="antibodies" value="94 antibodies from 17 providers"/>
</dbReference>
<dbReference type="DNASU" id="224661"/>
<dbReference type="Ensembl" id="ENSMUST00000114764.8">
    <molecule id="Q8R0C3-1"/>
    <property type="protein sequence ID" value="ENSMUSP00000110412.2"/>
    <property type="gene ID" value="ENSMUSG00000036196.17"/>
</dbReference>
<dbReference type="Ensembl" id="ENSMUST00000145224.2">
    <molecule id="Q8R0C3-2"/>
    <property type="protein sequence ID" value="ENSMUSP00000156853.2"/>
    <property type="gene ID" value="ENSMUSG00000036196.17"/>
</dbReference>
<dbReference type="GeneID" id="224661"/>
<dbReference type="KEGG" id="mmu:224661"/>
<dbReference type="UCSC" id="uc008brk.1">
    <molecule id="Q8R0C3-2"/>
    <property type="organism name" value="mouse"/>
</dbReference>
<dbReference type="UCSC" id="uc056zdz.1">
    <molecule id="Q8R0C3-1"/>
    <property type="organism name" value="mouse"/>
</dbReference>
<dbReference type="AGR" id="MGI:2385046"/>
<dbReference type="CTD" id="116369"/>
<dbReference type="MGI" id="MGI:2385046">
    <property type="gene designation" value="Slc26a8"/>
</dbReference>
<dbReference type="VEuPathDB" id="HostDB:ENSMUSG00000036196"/>
<dbReference type="eggNOG" id="KOG0236">
    <property type="taxonomic scope" value="Eukaryota"/>
</dbReference>
<dbReference type="GeneTree" id="ENSGT01120000271864"/>
<dbReference type="HOGENOM" id="CLU_003182_9_3_1"/>
<dbReference type="InParanoid" id="Q8R0C3"/>
<dbReference type="OMA" id="MFPILNW"/>
<dbReference type="OrthoDB" id="288203at2759"/>
<dbReference type="PhylomeDB" id="Q8R0C3"/>
<dbReference type="TreeFam" id="TF313784"/>
<dbReference type="BioGRID-ORCS" id="224661">
    <property type="hits" value="3 hits in 54 CRISPR screens"/>
</dbReference>
<dbReference type="ChiTaRS" id="Slc26a8">
    <property type="organism name" value="mouse"/>
</dbReference>
<dbReference type="PRO" id="PR:Q8R0C3"/>
<dbReference type="Proteomes" id="UP000000589">
    <property type="component" value="Chromosome 17"/>
</dbReference>
<dbReference type="RNAct" id="Q8R0C3">
    <property type="molecule type" value="protein"/>
</dbReference>
<dbReference type="Bgee" id="ENSMUSG00000036196">
    <property type="expression patterns" value="Expressed in spermatocyte and 88 other cell types or tissues"/>
</dbReference>
<dbReference type="ExpressionAtlas" id="Q8R0C3">
    <property type="expression patterns" value="baseline and differential"/>
</dbReference>
<dbReference type="GO" id="GO:0005886">
    <property type="term" value="C:plasma membrane"/>
    <property type="evidence" value="ECO:0007669"/>
    <property type="project" value="Ensembl"/>
</dbReference>
<dbReference type="GO" id="GO:0097227">
    <property type="term" value="C:sperm annulus"/>
    <property type="evidence" value="ECO:0000250"/>
    <property type="project" value="UniProtKB"/>
</dbReference>
<dbReference type="GO" id="GO:0005254">
    <property type="term" value="F:chloride channel activity"/>
    <property type="evidence" value="ECO:0007669"/>
    <property type="project" value="Ensembl"/>
</dbReference>
<dbReference type="GO" id="GO:0019531">
    <property type="term" value="F:oxalate transmembrane transporter activity"/>
    <property type="evidence" value="ECO:0007669"/>
    <property type="project" value="Ensembl"/>
</dbReference>
<dbReference type="GO" id="GO:0160044">
    <property type="term" value="F:sulfate:chloride antiporter activity"/>
    <property type="evidence" value="ECO:0000250"/>
    <property type="project" value="UniProtKB"/>
</dbReference>
<dbReference type="GO" id="GO:0030154">
    <property type="term" value="P:cell differentiation"/>
    <property type="evidence" value="ECO:0007669"/>
    <property type="project" value="UniProtKB-KW"/>
</dbReference>
<dbReference type="GO" id="GO:0006821">
    <property type="term" value="P:chloride transport"/>
    <property type="evidence" value="ECO:0000250"/>
    <property type="project" value="UniProtKB"/>
</dbReference>
<dbReference type="GO" id="GO:0051321">
    <property type="term" value="P:meiotic cell cycle"/>
    <property type="evidence" value="ECO:0007669"/>
    <property type="project" value="UniProtKB-KW"/>
</dbReference>
<dbReference type="GO" id="GO:0007283">
    <property type="term" value="P:spermatogenesis"/>
    <property type="evidence" value="ECO:0007669"/>
    <property type="project" value="UniProtKB-KW"/>
</dbReference>
<dbReference type="GO" id="GO:1902358">
    <property type="term" value="P:sulfate transmembrane transport"/>
    <property type="evidence" value="ECO:0000250"/>
    <property type="project" value="UniProtKB"/>
</dbReference>
<dbReference type="CDD" id="cd07042">
    <property type="entry name" value="STAS_SulP_like_sulfate_transporter"/>
    <property type="match status" value="1"/>
</dbReference>
<dbReference type="Gene3D" id="3.30.750.24">
    <property type="entry name" value="STAS domain"/>
    <property type="match status" value="1"/>
</dbReference>
<dbReference type="InterPro" id="IPR011547">
    <property type="entry name" value="SLC26A/SulP_dom"/>
</dbReference>
<dbReference type="InterPro" id="IPR001902">
    <property type="entry name" value="SLC26A/SulP_fam"/>
</dbReference>
<dbReference type="InterPro" id="IPR002645">
    <property type="entry name" value="STAS_dom"/>
</dbReference>
<dbReference type="InterPro" id="IPR036513">
    <property type="entry name" value="STAS_dom_sf"/>
</dbReference>
<dbReference type="PANTHER" id="PTHR11814">
    <property type="entry name" value="SULFATE TRANSPORTER"/>
    <property type="match status" value="1"/>
</dbReference>
<dbReference type="Pfam" id="PF01740">
    <property type="entry name" value="STAS"/>
    <property type="match status" value="1"/>
</dbReference>
<dbReference type="Pfam" id="PF00916">
    <property type="entry name" value="Sulfate_transp"/>
    <property type="match status" value="1"/>
</dbReference>
<dbReference type="SUPFAM" id="SSF52091">
    <property type="entry name" value="SpoIIaa-like"/>
    <property type="match status" value="1"/>
</dbReference>
<dbReference type="PROSITE" id="PS50801">
    <property type="entry name" value="STAS"/>
    <property type="match status" value="1"/>
</dbReference>